<keyword id="KW-0963">Cytoplasm</keyword>
<keyword id="KW-0396">Initiation factor</keyword>
<keyword id="KW-0648">Protein biosynthesis</keyword>
<dbReference type="EMBL" id="CP000026">
    <property type="protein sequence ID" value="AAV77443.1"/>
    <property type="molecule type" value="Genomic_DNA"/>
</dbReference>
<dbReference type="RefSeq" id="WP_011233062.1">
    <property type="nucleotide sequence ID" value="NC_006511.1"/>
</dbReference>
<dbReference type="SMR" id="Q5PH88"/>
<dbReference type="KEGG" id="spt:SPA1510"/>
<dbReference type="HOGENOM" id="CLU_054919_3_2_6"/>
<dbReference type="Proteomes" id="UP000008185">
    <property type="component" value="Chromosome"/>
</dbReference>
<dbReference type="GO" id="GO:0005829">
    <property type="term" value="C:cytosol"/>
    <property type="evidence" value="ECO:0007669"/>
    <property type="project" value="TreeGrafter"/>
</dbReference>
<dbReference type="GO" id="GO:0016020">
    <property type="term" value="C:membrane"/>
    <property type="evidence" value="ECO:0007669"/>
    <property type="project" value="TreeGrafter"/>
</dbReference>
<dbReference type="GO" id="GO:0043022">
    <property type="term" value="F:ribosome binding"/>
    <property type="evidence" value="ECO:0007669"/>
    <property type="project" value="TreeGrafter"/>
</dbReference>
<dbReference type="GO" id="GO:0003743">
    <property type="term" value="F:translation initiation factor activity"/>
    <property type="evidence" value="ECO:0007669"/>
    <property type="project" value="UniProtKB-UniRule"/>
</dbReference>
<dbReference type="GO" id="GO:0032790">
    <property type="term" value="P:ribosome disassembly"/>
    <property type="evidence" value="ECO:0007669"/>
    <property type="project" value="TreeGrafter"/>
</dbReference>
<dbReference type="FunFam" id="3.10.20.80:FF:000001">
    <property type="entry name" value="Translation initiation factor IF-3"/>
    <property type="match status" value="1"/>
</dbReference>
<dbReference type="FunFam" id="3.30.110.10:FF:000001">
    <property type="entry name" value="Translation initiation factor IF-3"/>
    <property type="match status" value="1"/>
</dbReference>
<dbReference type="Gene3D" id="3.30.110.10">
    <property type="entry name" value="Translation initiation factor 3 (IF-3), C-terminal domain"/>
    <property type="match status" value="1"/>
</dbReference>
<dbReference type="Gene3D" id="3.10.20.80">
    <property type="entry name" value="Translation initiation factor 3 (IF-3), N-terminal domain"/>
    <property type="match status" value="1"/>
</dbReference>
<dbReference type="HAMAP" id="MF_00080">
    <property type="entry name" value="IF_3"/>
    <property type="match status" value="1"/>
</dbReference>
<dbReference type="InterPro" id="IPR036788">
    <property type="entry name" value="T_IF-3_C_sf"/>
</dbReference>
<dbReference type="InterPro" id="IPR036787">
    <property type="entry name" value="T_IF-3_N_sf"/>
</dbReference>
<dbReference type="InterPro" id="IPR019813">
    <property type="entry name" value="Translation_initiation_fac3_CS"/>
</dbReference>
<dbReference type="InterPro" id="IPR001288">
    <property type="entry name" value="Translation_initiation_fac_3"/>
</dbReference>
<dbReference type="InterPro" id="IPR019815">
    <property type="entry name" value="Translation_initiation_fac_3_C"/>
</dbReference>
<dbReference type="InterPro" id="IPR019814">
    <property type="entry name" value="Translation_initiation_fac_3_N"/>
</dbReference>
<dbReference type="NCBIfam" id="TIGR00168">
    <property type="entry name" value="infC"/>
    <property type="match status" value="1"/>
</dbReference>
<dbReference type="PANTHER" id="PTHR10938">
    <property type="entry name" value="TRANSLATION INITIATION FACTOR IF-3"/>
    <property type="match status" value="1"/>
</dbReference>
<dbReference type="PANTHER" id="PTHR10938:SF0">
    <property type="entry name" value="TRANSLATION INITIATION FACTOR IF-3, MITOCHONDRIAL"/>
    <property type="match status" value="1"/>
</dbReference>
<dbReference type="Pfam" id="PF00707">
    <property type="entry name" value="IF3_C"/>
    <property type="match status" value="1"/>
</dbReference>
<dbReference type="Pfam" id="PF05198">
    <property type="entry name" value="IF3_N"/>
    <property type="match status" value="1"/>
</dbReference>
<dbReference type="SUPFAM" id="SSF55200">
    <property type="entry name" value="Translation initiation factor IF3, C-terminal domain"/>
    <property type="match status" value="1"/>
</dbReference>
<dbReference type="SUPFAM" id="SSF54364">
    <property type="entry name" value="Translation initiation factor IF3, N-terminal domain"/>
    <property type="match status" value="1"/>
</dbReference>
<dbReference type="PROSITE" id="PS00938">
    <property type="entry name" value="IF3"/>
    <property type="match status" value="1"/>
</dbReference>
<organism>
    <name type="scientific">Salmonella paratyphi A (strain ATCC 9150 / SARB42)</name>
    <dbReference type="NCBI Taxonomy" id="295319"/>
    <lineage>
        <taxon>Bacteria</taxon>
        <taxon>Pseudomonadati</taxon>
        <taxon>Pseudomonadota</taxon>
        <taxon>Gammaproteobacteria</taxon>
        <taxon>Enterobacterales</taxon>
        <taxon>Enterobacteriaceae</taxon>
        <taxon>Salmonella</taxon>
    </lineage>
</organism>
<evidence type="ECO:0000255" key="1">
    <source>
        <dbReference type="HAMAP-Rule" id="MF_00080"/>
    </source>
</evidence>
<sequence length="180" mass="20624">MKGGKRVQTARPNRINSEIRAQEVRLTGLEGEQLGIVSLREALEKTEEAGVDLVEISPNAEPPVCRIMDYGKFLYEKSKSSKEQKKKQKVIQVKEIKFRPGTDEGDYQVKLRSLIRFLEEGDKAKITLRFRGREMAHQQIGMEVLNRVKDDLQELAVVESFPTKIEGRQMIMVLAPKKKQ</sequence>
<proteinExistence type="inferred from homology"/>
<comment type="function">
    <text evidence="1">IF-3 binds to the 30S ribosomal subunit and shifts the equilibrium between 70S ribosomes and their 50S and 30S subunits in favor of the free subunits, thus enhancing the availability of 30S subunits on which protein synthesis initiation begins.</text>
</comment>
<comment type="subunit">
    <text evidence="1">Monomer.</text>
</comment>
<comment type="subcellular location">
    <subcellularLocation>
        <location evidence="1">Cytoplasm</location>
    </subcellularLocation>
</comment>
<comment type="similarity">
    <text evidence="1">Belongs to the IF-3 family.</text>
</comment>
<name>IF3_SALPA</name>
<feature type="chain" id="PRO_1000004563" description="Translation initiation factor IF-3">
    <location>
        <begin position="1"/>
        <end position="180"/>
    </location>
</feature>
<accession>Q5PH88</accession>
<protein>
    <recommendedName>
        <fullName evidence="1">Translation initiation factor IF-3</fullName>
    </recommendedName>
</protein>
<gene>
    <name evidence="1" type="primary">infC</name>
    <name type="ordered locus">SPA1510</name>
</gene>
<reference key="1">
    <citation type="journal article" date="2004" name="Nat. Genet.">
        <title>Comparison of genome degradation in Paratyphi A and Typhi, human-restricted serovars of Salmonella enterica that cause typhoid.</title>
        <authorList>
            <person name="McClelland M."/>
            <person name="Sanderson K.E."/>
            <person name="Clifton S.W."/>
            <person name="Latreille P."/>
            <person name="Porwollik S."/>
            <person name="Sabo A."/>
            <person name="Meyer R."/>
            <person name="Bieri T."/>
            <person name="Ozersky P."/>
            <person name="McLellan M."/>
            <person name="Harkins C.R."/>
            <person name="Wang C."/>
            <person name="Nguyen C."/>
            <person name="Berghoff A."/>
            <person name="Elliott G."/>
            <person name="Kohlberg S."/>
            <person name="Strong C."/>
            <person name="Du F."/>
            <person name="Carter J."/>
            <person name="Kremizki C."/>
            <person name="Layman D."/>
            <person name="Leonard S."/>
            <person name="Sun H."/>
            <person name="Fulton L."/>
            <person name="Nash W."/>
            <person name="Miner T."/>
            <person name="Minx P."/>
            <person name="Delehaunty K."/>
            <person name="Fronick C."/>
            <person name="Magrini V."/>
            <person name="Nhan M."/>
            <person name="Warren W."/>
            <person name="Florea L."/>
            <person name="Spieth J."/>
            <person name="Wilson R.K."/>
        </authorList>
    </citation>
    <scope>NUCLEOTIDE SEQUENCE [LARGE SCALE GENOMIC DNA]</scope>
    <source>
        <strain>ATCC 9150 / SARB42</strain>
    </source>
</reference>